<proteinExistence type="inferred from homology"/>
<organism>
    <name type="scientific">Legionella pneumophila subsp. pneumophila (strain Philadelphia 1 / ATCC 33152 / DSM 7513)</name>
    <dbReference type="NCBI Taxonomy" id="272624"/>
    <lineage>
        <taxon>Bacteria</taxon>
        <taxon>Pseudomonadati</taxon>
        <taxon>Pseudomonadota</taxon>
        <taxon>Gammaproteobacteria</taxon>
        <taxon>Legionellales</taxon>
        <taxon>Legionellaceae</taxon>
        <taxon>Legionella</taxon>
    </lineage>
</organism>
<accession>Q5ZUJ3</accession>
<evidence type="ECO:0000255" key="1">
    <source>
        <dbReference type="HAMAP-Rule" id="MF_00096"/>
    </source>
</evidence>
<evidence type="ECO:0000305" key="2"/>
<comment type="function">
    <text evidence="1">This protein is involved in the repair of mismatches in DNA. It is possible that it carries out the mismatch recognition step. This protein has a weak ATPase activity.</text>
</comment>
<comment type="similarity">
    <text evidence="1">Belongs to the DNA mismatch repair MutS family.</text>
</comment>
<comment type="sequence caution" evidence="2">
    <conflict type="erroneous initiation">
        <sequence resource="EMBL-CDS" id="AAU27884"/>
    </conflict>
</comment>
<protein>
    <recommendedName>
        <fullName evidence="1">DNA mismatch repair protein MutS</fullName>
    </recommendedName>
</protein>
<name>MUTS_LEGPH</name>
<feature type="chain" id="PRO_0000224381" description="DNA mismatch repair protein MutS">
    <location>
        <begin position="1"/>
        <end position="846"/>
    </location>
</feature>
<feature type="binding site" evidence="1">
    <location>
        <begin position="610"/>
        <end position="617"/>
    </location>
    <ligand>
        <name>ATP</name>
        <dbReference type="ChEBI" id="CHEBI:30616"/>
    </ligand>
</feature>
<dbReference type="EMBL" id="AE017354">
    <property type="protein sequence ID" value="AAU27884.1"/>
    <property type="status" value="ALT_INIT"/>
    <property type="molecule type" value="Genomic_DNA"/>
</dbReference>
<dbReference type="RefSeq" id="WP_014844166.1">
    <property type="nucleotide sequence ID" value="NC_002942.5"/>
</dbReference>
<dbReference type="RefSeq" id="YP_095831.1">
    <property type="nucleotide sequence ID" value="NC_002942.5"/>
</dbReference>
<dbReference type="SMR" id="Q5ZUJ3"/>
<dbReference type="STRING" id="272624.lpg1805"/>
<dbReference type="PaxDb" id="272624-lpg1805"/>
<dbReference type="GeneID" id="57035797"/>
<dbReference type="KEGG" id="lpn:lpg1805"/>
<dbReference type="PATRIC" id="fig|272624.6.peg.1893"/>
<dbReference type="eggNOG" id="COG0249">
    <property type="taxonomic scope" value="Bacteria"/>
</dbReference>
<dbReference type="HOGENOM" id="CLU_002472_4_0_6"/>
<dbReference type="OrthoDB" id="9802448at2"/>
<dbReference type="Proteomes" id="UP000000609">
    <property type="component" value="Chromosome"/>
</dbReference>
<dbReference type="GO" id="GO:0005829">
    <property type="term" value="C:cytosol"/>
    <property type="evidence" value="ECO:0007669"/>
    <property type="project" value="TreeGrafter"/>
</dbReference>
<dbReference type="GO" id="GO:0005524">
    <property type="term" value="F:ATP binding"/>
    <property type="evidence" value="ECO:0007669"/>
    <property type="project" value="UniProtKB-UniRule"/>
</dbReference>
<dbReference type="GO" id="GO:0140664">
    <property type="term" value="F:ATP-dependent DNA damage sensor activity"/>
    <property type="evidence" value="ECO:0007669"/>
    <property type="project" value="InterPro"/>
</dbReference>
<dbReference type="GO" id="GO:0003684">
    <property type="term" value="F:damaged DNA binding"/>
    <property type="evidence" value="ECO:0007669"/>
    <property type="project" value="UniProtKB-UniRule"/>
</dbReference>
<dbReference type="GO" id="GO:0030983">
    <property type="term" value="F:mismatched DNA binding"/>
    <property type="evidence" value="ECO:0007669"/>
    <property type="project" value="InterPro"/>
</dbReference>
<dbReference type="GO" id="GO:0006298">
    <property type="term" value="P:mismatch repair"/>
    <property type="evidence" value="ECO:0007669"/>
    <property type="project" value="UniProtKB-UniRule"/>
</dbReference>
<dbReference type="CDD" id="cd03284">
    <property type="entry name" value="ABC_MutS1"/>
    <property type="match status" value="1"/>
</dbReference>
<dbReference type="FunFam" id="1.10.1420.10:FF:000002">
    <property type="entry name" value="DNA mismatch repair protein MutS"/>
    <property type="match status" value="1"/>
</dbReference>
<dbReference type="FunFam" id="3.40.1170.10:FF:000001">
    <property type="entry name" value="DNA mismatch repair protein MutS"/>
    <property type="match status" value="1"/>
</dbReference>
<dbReference type="FunFam" id="3.40.50.300:FF:000870">
    <property type="entry name" value="MutS protein homolog 4"/>
    <property type="match status" value="1"/>
</dbReference>
<dbReference type="Gene3D" id="1.10.1420.10">
    <property type="match status" value="2"/>
</dbReference>
<dbReference type="Gene3D" id="6.10.140.430">
    <property type="match status" value="1"/>
</dbReference>
<dbReference type="Gene3D" id="3.40.1170.10">
    <property type="entry name" value="DNA repair protein MutS, domain I"/>
    <property type="match status" value="1"/>
</dbReference>
<dbReference type="Gene3D" id="3.30.420.110">
    <property type="entry name" value="MutS, connector domain"/>
    <property type="match status" value="1"/>
</dbReference>
<dbReference type="Gene3D" id="3.40.50.300">
    <property type="entry name" value="P-loop containing nucleotide triphosphate hydrolases"/>
    <property type="match status" value="1"/>
</dbReference>
<dbReference type="HAMAP" id="MF_00096">
    <property type="entry name" value="MutS"/>
    <property type="match status" value="1"/>
</dbReference>
<dbReference type="InterPro" id="IPR005748">
    <property type="entry name" value="DNA_mismatch_repair_MutS"/>
</dbReference>
<dbReference type="InterPro" id="IPR007695">
    <property type="entry name" value="DNA_mismatch_repair_MutS-lik_N"/>
</dbReference>
<dbReference type="InterPro" id="IPR017261">
    <property type="entry name" value="DNA_mismatch_repair_MutS/MSH"/>
</dbReference>
<dbReference type="InterPro" id="IPR000432">
    <property type="entry name" value="DNA_mismatch_repair_MutS_C"/>
</dbReference>
<dbReference type="InterPro" id="IPR007861">
    <property type="entry name" value="DNA_mismatch_repair_MutS_clamp"/>
</dbReference>
<dbReference type="InterPro" id="IPR007696">
    <property type="entry name" value="DNA_mismatch_repair_MutS_core"/>
</dbReference>
<dbReference type="InterPro" id="IPR016151">
    <property type="entry name" value="DNA_mismatch_repair_MutS_N"/>
</dbReference>
<dbReference type="InterPro" id="IPR036187">
    <property type="entry name" value="DNA_mismatch_repair_MutS_sf"/>
</dbReference>
<dbReference type="InterPro" id="IPR007860">
    <property type="entry name" value="DNA_mmatch_repair_MutS_con_dom"/>
</dbReference>
<dbReference type="InterPro" id="IPR045076">
    <property type="entry name" value="MutS"/>
</dbReference>
<dbReference type="InterPro" id="IPR036678">
    <property type="entry name" value="MutS_con_dom_sf"/>
</dbReference>
<dbReference type="InterPro" id="IPR027417">
    <property type="entry name" value="P-loop_NTPase"/>
</dbReference>
<dbReference type="NCBIfam" id="TIGR01070">
    <property type="entry name" value="mutS1"/>
    <property type="match status" value="1"/>
</dbReference>
<dbReference type="NCBIfam" id="NF003810">
    <property type="entry name" value="PRK05399.1"/>
    <property type="match status" value="1"/>
</dbReference>
<dbReference type="PANTHER" id="PTHR11361:SF34">
    <property type="entry name" value="DNA MISMATCH REPAIR PROTEIN MSH1, MITOCHONDRIAL"/>
    <property type="match status" value="1"/>
</dbReference>
<dbReference type="PANTHER" id="PTHR11361">
    <property type="entry name" value="DNA MISMATCH REPAIR PROTEIN MUTS FAMILY MEMBER"/>
    <property type="match status" value="1"/>
</dbReference>
<dbReference type="Pfam" id="PF01624">
    <property type="entry name" value="MutS_I"/>
    <property type="match status" value="1"/>
</dbReference>
<dbReference type="Pfam" id="PF05188">
    <property type="entry name" value="MutS_II"/>
    <property type="match status" value="1"/>
</dbReference>
<dbReference type="Pfam" id="PF05192">
    <property type="entry name" value="MutS_III"/>
    <property type="match status" value="1"/>
</dbReference>
<dbReference type="Pfam" id="PF05190">
    <property type="entry name" value="MutS_IV"/>
    <property type="match status" value="1"/>
</dbReference>
<dbReference type="Pfam" id="PF00488">
    <property type="entry name" value="MutS_V"/>
    <property type="match status" value="1"/>
</dbReference>
<dbReference type="PIRSF" id="PIRSF037677">
    <property type="entry name" value="DNA_mis_repair_Msh6"/>
    <property type="match status" value="1"/>
</dbReference>
<dbReference type="SMART" id="SM00534">
    <property type="entry name" value="MUTSac"/>
    <property type="match status" value="1"/>
</dbReference>
<dbReference type="SMART" id="SM00533">
    <property type="entry name" value="MUTSd"/>
    <property type="match status" value="1"/>
</dbReference>
<dbReference type="SUPFAM" id="SSF55271">
    <property type="entry name" value="DNA repair protein MutS, domain I"/>
    <property type="match status" value="1"/>
</dbReference>
<dbReference type="SUPFAM" id="SSF53150">
    <property type="entry name" value="DNA repair protein MutS, domain II"/>
    <property type="match status" value="1"/>
</dbReference>
<dbReference type="SUPFAM" id="SSF48334">
    <property type="entry name" value="DNA repair protein MutS, domain III"/>
    <property type="match status" value="1"/>
</dbReference>
<dbReference type="SUPFAM" id="SSF52540">
    <property type="entry name" value="P-loop containing nucleoside triphosphate hydrolases"/>
    <property type="match status" value="1"/>
</dbReference>
<dbReference type="PROSITE" id="PS00486">
    <property type="entry name" value="DNA_MISMATCH_REPAIR_2"/>
    <property type="match status" value="1"/>
</dbReference>
<keyword id="KW-0067">ATP-binding</keyword>
<keyword id="KW-0227">DNA damage</keyword>
<keyword id="KW-0234">DNA repair</keyword>
<keyword id="KW-0238">DNA-binding</keyword>
<keyword id="KW-0547">Nucleotide-binding</keyword>
<keyword id="KW-1185">Reference proteome</keyword>
<sequence>MASSHTPMMQQYLRIKTDYPDMLLFYRMGDFYELFFDDAKRASQLLDLTLTHRGQSADKPIPMAGVPYHAVENYLARLLKKGESVAICEQIGDPATSKGPVERQVTRIITPGTVTDEALLDARKDNILLAIHTQKQKIGIAWVDLGGGRFHLQELTEEHQLNAELVRLQPAELLCKESTPLPSFCSNFAVKFRPGWEFDASNAHKLLCEQFSVTDLSAFGEQNYPTALIAAGALLAYLKTTQKQSLPHLTTLTLEQSEDYLQLDASTQKHLELFENIHGGGEHCLLSILDKTACAMGSRLLKRWLGKPLKQHAIIQTRQQAIKEIIFLQQDVSLHQLIKQCADVERIVSRIALKSARPRDLVSLLQTLTLLPAIHDELQENKSLLINEIKKEISPLPLLQQLLETAIIDNPPMLIRDGGVIAPGFDEELDELRNLSSNAHETLVKLEQEEKNRTGLSTLKLGYNSVQGFYIELSKAQAQNAPPHFHRKQTLKNVERYITPELKLFEDKVLSAQSKALAREKWLYDNLLEEIQQYIPELSDLAKSLAQLDVLVTLAERAQSLNWNCPNLVPESGIMIQAGRHPVIEPLLQERFIANDLELKPNQNMLLITGPNMGGKSTYMRQTALIVLLAHIGSFVPADKVTLGPLDRIFTRIGASDDLSSGRSTFMVEMTETAQILRQATSQSLVLIDEIGRGTSTYDGMALAYASCAFLASTIKAYTLFSTHYLELTELPKEFSCIRNVHLQASIKTGQIVFLYRVEEGCANRSYGLEVAELAGIPKEVLKLAHEHLNQIQDTQSILVQTQIIKPPTSPVLTELKKIDPDRLTAKEALDLIYKLKHLECAESIN</sequence>
<reference key="1">
    <citation type="journal article" date="2004" name="Science">
        <title>The genomic sequence of the accidental pathogen Legionella pneumophila.</title>
        <authorList>
            <person name="Chien M."/>
            <person name="Morozova I."/>
            <person name="Shi S."/>
            <person name="Sheng H."/>
            <person name="Chen J."/>
            <person name="Gomez S.M."/>
            <person name="Asamani G."/>
            <person name="Hill K."/>
            <person name="Nuara J."/>
            <person name="Feder M."/>
            <person name="Rineer J."/>
            <person name="Greenberg J.J."/>
            <person name="Steshenko V."/>
            <person name="Park S.H."/>
            <person name="Zhao B."/>
            <person name="Teplitskaya E."/>
            <person name="Edwards J.R."/>
            <person name="Pampou S."/>
            <person name="Georghiou A."/>
            <person name="Chou I.-C."/>
            <person name="Iannuccilli W."/>
            <person name="Ulz M.E."/>
            <person name="Kim D.H."/>
            <person name="Geringer-Sameth A."/>
            <person name="Goldsberry C."/>
            <person name="Morozov P."/>
            <person name="Fischer S.G."/>
            <person name="Segal G."/>
            <person name="Qu X."/>
            <person name="Rzhetsky A."/>
            <person name="Zhang P."/>
            <person name="Cayanis E."/>
            <person name="De Jong P.J."/>
            <person name="Ju J."/>
            <person name="Kalachikov S."/>
            <person name="Shuman H.A."/>
            <person name="Russo J.J."/>
        </authorList>
    </citation>
    <scope>NUCLEOTIDE SEQUENCE [LARGE SCALE GENOMIC DNA]</scope>
    <source>
        <strain>Philadelphia 1 / ATCC 33152 / DSM 7513</strain>
    </source>
</reference>
<gene>
    <name evidence="1" type="primary">mutS</name>
    <name type="ordered locus">lpg1805</name>
</gene>